<accession>C6TCZ5</accession>
<evidence type="ECO:0000250" key="1">
    <source>
        <dbReference type="UniProtKB" id="Q7XPM8"/>
    </source>
</evidence>
<evidence type="ECO:0000250" key="2">
    <source>
        <dbReference type="UniProtKB" id="Q9C9E3"/>
    </source>
</evidence>
<evidence type="ECO:0000250" key="3">
    <source>
        <dbReference type="UniProtKB" id="Q9LMA8"/>
    </source>
</evidence>
<evidence type="ECO:0000255" key="4"/>
<evidence type="ECO:0000255" key="5">
    <source>
        <dbReference type="PROSITE-ProRule" id="PRU00650"/>
    </source>
</evidence>
<evidence type="ECO:0000255" key="6">
    <source>
        <dbReference type="PROSITE-ProRule" id="PRU00768"/>
    </source>
</evidence>
<evidence type="ECO:0000256" key="7">
    <source>
        <dbReference type="SAM" id="MobiDB-lite"/>
    </source>
</evidence>
<evidence type="ECO:0000269" key="8">
    <source>
    </source>
</evidence>
<evidence type="ECO:0000269" key="9">
    <source>
    </source>
</evidence>
<evidence type="ECO:0000303" key="10">
    <source>
    </source>
</evidence>
<evidence type="ECO:0000303" key="11">
    <source>
    </source>
</evidence>
<evidence type="ECO:0000305" key="12"/>
<evidence type="ECO:0000305" key="13">
    <source>
    </source>
</evidence>
<evidence type="ECO:0000312" key="14">
    <source>
        <dbReference type="EMBL" id="ALA09268.1"/>
    </source>
</evidence>
<evidence type="ECO:0000312" key="15">
    <source>
        <dbReference type="EMBL" id="KRH47640.1"/>
    </source>
</evidence>
<name>JAZ1_SOYBN</name>
<proteinExistence type="evidence at protein level"/>
<comment type="function">
    <text evidence="1">Repressor of jasmonate responses.</text>
</comment>
<comment type="subunit">
    <text evidence="8">(Microbial infection) Interacts with the pathogenic Pseudomonas syringae HopZ1a protein; this interaction leads to its degradation.</text>
</comment>
<comment type="subcellular location">
    <subcellularLocation>
        <location evidence="6 8">Nucleus</location>
    </subcellularLocation>
</comment>
<comment type="subcellular location">
    <subcellularLocation>
        <location evidence="6 8">Nucleus</location>
    </subcellularLocation>
    <subcellularLocation>
        <location evidence="8">Cell membrane</location>
    </subcellularLocation>
    <text evidence="8">(Microbial infection) Interacts with Pseudomonas syringae HopZ1a at the plasma membrane and in the nucleus.</text>
</comment>
<comment type="tissue specificity">
    <text evidence="9">Mostly expressed in leaves and flowers and, to a lower extent, in grean pods and roots.</text>
</comment>
<comment type="induction">
    <text evidence="3">(Microbial infection) Triggered to degradation by the pathogenic Pseudomonas syringae HopZ1a protein in a COI1-dependent manner, thereby activating host jasmonate signaling.</text>
</comment>
<comment type="domain">
    <text evidence="1 2">The jas domain (183-205) is required for interaction with COI1 and Pseudomonas syringae HopZ1a.</text>
</comment>
<comment type="PTM">
    <text evidence="1">Ubiquitinated. Targeted for degradation by the SCF(COI1) E3 ubiquitin ligase-proteasome pathway during jasmonate signaling.</text>
</comment>
<comment type="PTM">
    <text evidence="8">(Microbial infection) Acetylated by Pseudomonas syringae HopZ1a.</text>
</comment>
<comment type="similarity">
    <text evidence="12">Belongs to the TIFY/JAZ family.</text>
</comment>
<gene>
    <name evidence="10" type="primary">JAZ1</name>
    <name evidence="10" type="synonym">ZINP3</name>
    <name evidence="14" type="ordered locus">Glyma07g04630.1</name>
    <name evidence="15" type="ORF">GLYMA_07G041400</name>
</gene>
<organism>
    <name type="scientific">Glycine max</name>
    <name type="common">Soybean</name>
    <name type="synonym">Glycine hispida</name>
    <dbReference type="NCBI Taxonomy" id="3847"/>
    <lineage>
        <taxon>Eukaryota</taxon>
        <taxon>Viridiplantae</taxon>
        <taxon>Streptophyta</taxon>
        <taxon>Embryophyta</taxon>
        <taxon>Tracheophyta</taxon>
        <taxon>Spermatophyta</taxon>
        <taxon>Magnoliopsida</taxon>
        <taxon>eudicotyledons</taxon>
        <taxon>Gunneridae</taxon>
        <taxon>Pentapetalae</taxon>
        <taxon>rosids</taxon>
        <taxon>fabids</taxon>
        <taxon>Fabales</taxon>
        <taxon>Fabaceae</taxon>
        <taxon>Papilionoideae</taxon>
        <taxon>50 kb inversion clade</taxon>
        <taxon>NPAAA clade</taxon>
        <taxon>indigoferoid/millettioid clade</taxon>
        <taxon>Phaseoleae</taxon>
        <taxon>Glycine</taxon>
        <taxon>Glycine subgen. Soja</taxon>
    </lineage>
</organism>
<feature type="chain" id="PRO_0000453374" description="Jasmonate ZIM domain-containing protein 1">
    <location>
        <begin position="1"/>
        <end position="232"/>
    </location>
</feature>
<feature type="domain" description="Tify" evidence="5">
    <location>
        <begin position="96"/>
        <end position="131"/>
    </location>
</feature>
<feature type="region of interest" description="Disordered" evidence="7">
    <location>
        <begin position="1"/>
        <end position="24"/>
    </location>
</feature>
<feature type="region of interest" description="Disordered" evidence="7">
    <location>
        <begin position="133"/>
        <end position="232"/>
    </location>
</feature>
<feature type="short sequence motif" description="Nuclear localization signal" evidence="6">
    <location>
        <begin position="182"/>
        <end position="189"/>
    </location>
</feature>
<feature type="short sequence motif" description="Jas" evidence="4">
    <location>
        <begin position="183"/>
        <end position="205"/>
    </location>
</feature>
<feature type="compositionally biased region" description="Basic and acidic residues" evidence="7">
    <location>
        <begin position="10"/>
        <end position="19"/>
    </location>
</feature>
<feature type="compositionally biased region" description="Polar residues" evidence="7">
    <location>
        <begin position="133"/>
        <end position="142"/>
    </location>
</feature>
<feature type="compositionally biased region" description="Polar residues" evidence="7">
    <location>
        <begin position="158"/>
        <end position="167"/>
    </location>
</feature>
<feature type="compositionally biased region" description="Basic and acidic residues" evidence="7">
    <location>
        <begin position="190"/>
        <end position="199"/>
    </location>
</feature>
<reference key="1">
    <citation type="journal article" date="2015" name="BMC Genomics">
        <title>Soybean transcription factor ORFeome associated with drought resistance: a valuable resource to accelerate research on abiotic stress resistance.</title>
        <authorList>
            <person name="Chai C."/>
            <person name="Wang Y."/>
            <person name="Joshi T."/>
            <person name="Valliyodan B."/>
            <person name="Prince S."/>
            <person name="Michel L."/>
            <person name="Xu D."/>
            <person name="Nguyen H.T."/>
        </authorList>
    </citation>
    <scope>NUCLEOTIDE SEQUENCE [MRNA]</scope>
    <scope>TISSUE SPECIFICITY</scope>
    <source>
        <strain>cv. Williams 82</strain>
    </source>
</reference>
<reference key="2">
    <citation type="journal article" date="2010" name="Nature">
        <title>Genome sequence of the palaeopolyploid soybean.</title>
        <authorList>
            <person name="Schmutz J."/>
            <person name="Cannon S.B."/>
            <person name="Schlueter J."/>
            <person name="Ma J."/>
            <person name="Mitros T."/>
            <person name="Nelson W."/>
            <person name="Hyten D.L."/>
            <person name="Song Q."/>
            <person name="Thelen J.J."/>
            <person name="Cheng J."/>
            <person name="Xu D."/>
            <person name="Hellsten U."/>
            <person name="May G.D."/>
            <person name="Yu Y."/>
            <person name="Sakurai T."/>
            <person name="Umezawa T."/>
            <person name="Bhattacharyya M.K."/>
            <person name="Sandhu D."/>
            <person name="Valliyodan B."/>
            <person name="Lindquist E."/>
            <person name="Peto M."/>
            <person name="Grant D."/>
            <person name="Shu S."/>
            <person name="Goodstein D."/>
            <person name="Barry K."/>
            <person name="Futrell-Griggs M."/>
            <person name="Abernathy B."/>
            <person name="Du J."/>
            <person name="Tian Z."/>
            <person name="Zhu L."/>
            <person name="Gill N."/>
            <person name="Joshi T."/>
            <person name="Libault M."/>
            <person name="Sethuraman A."/>
            <person name="Zhang X.-C."/>
            <person name="Shinozaki K."/>
            <person name="Nguyen H.T."/>
            <person name="Wing R.A."/>
            <person name="Cregan P."/>
            <person name="Specht J."/>
            <person name="Grimwood J."/>
            <person name="Rokhsar D."/>
            <person name="Stacey G."/>
            <person name="Shoemaker R.C."/>
            <person name="Jackson S.A."/>
        </authorList>
    </citation>
    <scope>NUCLEOTIDE SEQUENCE [LARGE SCALE GENOMIC DNA]</scope>
    <source>
        <strain>cv. Williams 82</strain>
        <tissue>Callus</tissue>
    </source>
</reference>
<reference key="3">
    <citation type="submission" date="2009-08" db="EMBL/GenBank/DDBJ databases">
        <authorList>
            <person name="Cheung F."/>
            <person name="Xiao Y."/>
            <person name="Chan A."/>
            <person name="Moskal W."/>
            <person name="Town C.D."/>
        </authorList>
    </citation>
    <scope>NUCLEOTIDE SEQUENCE [LARGE SCALE MRNA]</scope>
</reference>
<reference key="4">
    <citation type="journal article" date="2013" name="PLoS Pathog.">
        <title>Bacterial effector activates jasmonate signaling by directly targeting JAZ transcriptional repressors.</title>
        <authorList>
            <person name="Jiang S."/>
            <person name="Yao J."/>
            <person name="Ma K.-W."/>
            <person name="Zhou H."/>
            <person name="Song J."/>
            <person name="He S.Y."/>
            <person name="Ma W."/>
        </authorList>
    </citation>
    <scope>INTERACTION WITH PSEUDOMONAS SYRINGAE HOPZ1A (MICROBIAL INFECTION)</scope>
    <scope>SUBCELLULAR LOCATION (MICROBIAL INFECTION)</scope>
    <scope>ACETYLATION BY PSEUDOMONAS SYRINGAE HOPZ1A (MICROBIAL INFECTION)</scope>
    <source>
        <strain>cv. Williams 82</strain>
    </source>
</reference>
<protein>
    <recommendedName>
        <fullName evidence="13">Jasmonate ZIM domain-containing protein 1</fullName>
        <shortName evidence="13">GmJAZ1</shortName>
    </recommendedName>
    <alternativeName>
        <fullName evidence="11">HopZ1a-interacting protein 3</fullName>
    </alternativeName>
</protein>
<sequence>MSSFPNTVAEGRRSGKAPEKSTFSQTCSLLSQFLKEKRASADSTLGIGGKMEPKANTKALLGSLQNSDGALKLSASAMEFLPQLVENPCIKKSRSPGPESPQLTIFYAGKMLVFDAFPPEKATEVMEMATKLASNNSGTEESPPSLPVTTEKLAVSKMPQTNTSSETPKPGNQGVGSDMRYPRRASLLKFLEKRKERVNARGPYQMNNLKPEGSSSGGEPEDQCSKQFDLNF</sequence>
<keyword id="KW-0007">Acetylation</keyword>
<keyword id="KW-1003">Cell membrane</keyword>
<keyword id="KW-1184">Jasmonic acid signaling pathway</keyword>
<keyword id="KW-0472">Membrane</keyword>
<keyword id="KW-0539">Nucleus</keyword>
<keyword id="KW-0611">Plant defense</keyword>
<keyword id="KW-1185">Reference proteome</keyword>
<keyword id="KW-0804">Transcription</keyword>
<keyword id="KW-0805">Transcription regulation</keyword>
<keyword id="KW-0832">Ubl conjugation</keyword>
<dbReference type="EMBL" id="KT031244">
    <property type="protein sequence ID" value="ALA09268.1"/>
    <property type="molecule type" value="mRNA"/>
</dbReference>
<dbReference type="EMBL" id="CM000840">
    <property type="protein sequence ID" value="KRH47640.1"/>
    <property type="molecule type" value="Genomic_DNA"/>
</dbReference>
<dbReference type="EMBL" id="BT095444">
    <property type="protein sequence ID" value="ACU19697.1"/>
    <property type="molecule type" value="mRNA"/>
</dbReference>
<dbReference type="RefSeq" id="NP_001239983.1">
    <property type="nucleotide sequence ID" value="NM_001253054.2"/>
</dbReference>
<dbReference type="SMR" id="C6TCZ5"/>
<dbReference type="STRING" id="3847.C6TCZ5"/>
<dbReference type="PaxDb" id="3847-GLYMA07G04630.1"/>
<dbReference type="EnsemblPlants" id="KRH47640">
    <property type="protein sequence ID" value="KRH47640"/>
    <property type="gene ID" value="GLYMA_07G041400"/>
</dbReference>
<dbReference type="GeneID" id="100778559"/>
<dbReference type="Gramene" id="KRH47640">
    <property type="protein sequence ID" value="KRH47640"/>
    <property type="gene ID" value="GLYMA_07G041400"/>
</dbReference>
<dbReference type="KEGG" id="gmx:100778559"/>
<dbReference type="eggNOG" id="ENOG502S6PU">
    <property type="taxonomic scope" value="Eukaryota"/>
</dbReference>
<dbReference type="HOGENOM" id="CLU_1031949_0_0_1"/>
<dbReference type="InParanoid" id="C6TCZ5"/>
<dbReference type="OMA" id="QNSCKSP"/>
<dbReference type="OrthoDB" id="1937734at2759"/>
<dbReference type="Proteomes" id="UP000008827">
    <property type="component" value="Chromosome 7"/>
</dbReference>
<dbReference type="GO" id="GO:0005634">
    <property type="term" value="C:nucleus"/>
    <property type="evidence" value="ECO:0000314"/>
    <property type="project" value="UniProtKB"/>
</dbReference>
<dbReference type="GO" id="GO:0005886">
    <property type="term" value="C:plasma membrane"/>
    <property type="evidence" value="ECO:0000314"/>
    <property type="project" value="UniProtKB"/>
</dbReference>
<dbReference type="GO" id="GO:0006952">
    <property type="term" value="P:defense response"/>
    <property type="evidence" value="ECO:0007669"/>
    <property type="project" value="UniProtKB-KW"/>
</dbReference>
<dbReference type="GO" id="GO:0031347">
    <property type="term" value="P:regulation of defense response"/>
    <property type="evidence" value="ECO:0000318"/>
    <property type="project" value="GO_Central"/>
</dbReference>
<dbReference type="GO" id="GO:2000022">
    <property type="term" value="P:regulation of jasmonic acid mediated signaling pathway"/>
    <property type="evidence" value="ECO:0000318"/>
    <property type="project" value="GO_Central"/>
</dbReference>
<dbReference type="GO" id="GO:0009611">
    <property type="term" value="P:response to wounding"/>
    <property type="evidence" value="ECO:0000318"/>
    <property type="project" value="GO_Central"/>
</dbReference>
<dbReference type="InterPro" id="IPR018467">
    <property type="entry name" value="CCT_CS"/>
</dbReference>
<dbReference type="InterPro" id="IPR040390">
    <property type="entry name" value="TIFY/JAZ"/>
</dbReference>
<dbReference type="InterPro" id="IPR010399">
    <property type="entry name" value="Tify_dom"/>
</dbReference>
<dbReference type="PANTHER" id="PTHR33077:SF52">
    <property type="entry name" value="PROTEIN TIFY 11D"/>
    <property type="match status" value="1"/>
</dbReference>
<dbReference type="PANTHER" id="PTHR33077">
    <property type="entry name" value="PROTEIN TIFY 4A-RELATED-RELATED"/>
    <property type="match status" value="1"/>
</dbReference>
<dbReference type="Pfam" id="PF09425">
    <property type="entry name" value="Jas_motif"/>
    <property type="match status" value="1"/>
</dbReference>
<dbReference type="Pfam" id="PF06200">
    <property type="entry name" value="tify"/>
    <property type="match status" value="1"/>
</dbReference>
<dbReference type="SMART" id="SM00979">
    <property type="entry name" value="TIFY"/>
    <property type="match status" value="1"/>
</dbReference>
<dbReference type="PROSITE" id="PS51320">
    <property type="entry name" value="TIFY"/>
    <property type="match status" value="1"/>
</dbReference>